<sequence length="447" mass="47178">MARKLFGTDGVRGTANTAPMTAEMALRLGAAAGRYFRRDQSAAHRVVIGKDTRLSGYMFETALTAGFTSTGMNVLLLGPIPTPAVALLTQSMRADVGVMISASHNPADDNGIKFFGPDGYKLSDAAEEEIEEILAGDIRPAQAPNIGRAKRIDDGLGRYIERAKRTFPAHLRLDGLKVVVDCANGAAYKVAPAVLWELGADVIPVGVSPNGRNINRDCGSTAPQTAAEAVVSHGADVGICLDGDADRVMILDENGELADGDQLMALFATRWAAQGLLRDNTLVATVMSNLGLEYYLNDLGLKLVRTAVGDRYVVEAMRKGGWNLGGEQSGHIVMLDHGTTGDGLMAGLQFLAEMVQQGRSASELKHSFTTVPQRLENVRFGAGQDPLAAASVKSAIAAAEAQLSGKGRLLIRKSGTEPLVRVMAECEDEAMLTSVVGEVVAAVEAAC</sequence>
<gene>
    <name evidence="1" type="primary">glmM</name>
    <name type="ordered locus">Dshi_2397</name>
</gene>
<comment type="function">
    <text evidence="1">Catalyzes the conversion of glucosamine-6-phosphate to glucosamine-1-phosphate.</text>
</comment>
<comment type="catalytic activity">
    <reaction evidence="1">
        <text>alpha-D-glucosamine 1-phosphate = D-glucosamine 6-phosphate</text>
        <dbReference type="Rhea" id="RHEA:23424"/>
        <dbReference type="ChEBI" id="CHEBI:58516"/>
        <dbReference type="ChEBI" id="CHEBI:58725"/>
        <dbReference type="EC" id="5.4.2.10"/>
    </reaction>
</comment>
<comment type="cofactor">
    <cofactor evidence="1">
        <name>Mg(2+)</name>
        <dbReference type="ChEBI" id="CHEBI:18420"/>
    </cofactor>
    <text evidence="1">Binds 1 Mg(2+) ion per subunit.</text>
</comment>
<comment type="PTM">
    <text evidence="1">Activated by phosphorylation.</text>
</comment>
<comment type="similarity">
    <text evidence="1">Belongs to the phosphohexose mutase family.</text>
</comment>
<proteinExistence type="inferred from homology"/>
<reference key="1">
    <citation type="journal article" date="2010" name="ISME J.">
        <title>The complete genome sequence of the algal symbiont Dinoroseobacter shibae: a hitchhiker's guide to life in the sea.</title>
        <authorList>
            <person name="Wagner-Dobler I."/>
            <person name="Ballhausen B."/>
            <person name="Berger M."/>
            <person name="Brinkhoff T."/>
            <person name="Buchholz I."/>
            <person name="Bunk B."/>
            <person name="Cypionka H."/>
            <person name="Daniel R."/>
            <person name="Drepper T."/>
            <person name="Gerdts G."/>
            <person name="Hahnke S."/>
            <person name="Han C."/>
            <person name="Jahn D."/>
            <person name="Kalhoefer D."/>
            <person name="Kiss H."/>
            <person name="Klenk H.P."/>
            <person name="Kyrpides N."/>
            <person name="Liebl W."/>
            <person name="Liesegang H."/>
            <person name="Meincke L."/>
            <person name="Pati A."/>
            <person name="Petersen J."/>
            <person name="Piekarski T."/>
            <person name="Pommerenke C."/>
            <person name="Pradella S."/>
            <person name="Pukall R."/>
            <person name="Rabus R."/>
            <person name="Stackebrandt E."/>
            <person name="Thole S."/>
            <person name="Thompson L."/>
            <person name="Tielen P."/>
            <person name="Tomasch J."/>
            <person name="von Jan M."/>
            <person name="Wanphrut N."/>
            <person name="Wichels A."/>
            <person name="Zech H."/>
            <person name="Simon M."/>
        </authorList>
    </citation>
    <scope>NUCLEOTIDE SEQUENCE [LARGE SCALE GENOMIC DNA]</scope>
    <source>
        <strain>DSM 16493 / NCIMB 14021 / DFL 12</strain>
    </source>
</reference>
<dbReference type="EC" id="5.4.2.10" evidence="1"/>
<dbReference type="EMBL" id="CP000830">
    <property type="protein sequence ID" value="ABV94133.1"/>
    <property type="molecule type" value="Genomic_DNA"/>
</dbReference>
<dbReference type="RefSeq" id="WP_012179064.1">
    <property type="nucleotide sequence ID" value="NC_009952.1"/>
</dbReference>
<dbReference type="SMR" id="A8LS40"/>
<dbReference type="STRING" id="398580.Dshi_2397"/>
<dbReference type="KEGG" id="dsh:Dshi_2397"/>
<dbReference type="eggNOG" id="COG1109">
    <property type="taxonomic scope" value="Bacteria"/>
</dbReference>
<dbReference type="HOGENOM" id="CLU_016950_7_0_5"/>
<dbReference type="OrthoDB" id="9803322at2"/>
<dbReference type="Proteomes" id="UP000006833">
    <property type="component" value="Chromosome"/>
</dbReference>
<dbReference type="GO" id="GO:0005829">
    <property type="term" value="C:cytosol"/>
    <property type="evidence" value="ECO:0007669"/>
    <property type="project" value="TreeGrafter"/>
</dbReference>
<dbReference type="GO" id="GO:0000287">
    <property type="term" value="F:magnesium ion binding"/>
    <property type="evidence" value="ECO:0007669"/>
    <property type="project" value="UniProtKB-UniRule"/>
</dbReference>
<dbReference type="GO" id="GO:0008966">
    <property type="term" value="F:phosphoglucosamine mutase activity"/>
    <property type="evidence" value="ECO:0007669"/>
    <property type="project" value="UniProtKB-UniRule"/>
</dbReference>
<dbReference type="GO" id="GO:0004615">
    <property type="term" value="F:phosphomannomutase activity"/>
    <property type="evidence" value="ECO:0007669"/>
    <property type="project" value="TreeGrafter"/>
</dbReference>
<dbReference type="GO" id="GO:0005975">
    <property type="term" value="P:carbohydrate metabolic process"/>
    <property type="evidence" value="ECO:0007669"/>
    <property type="project" value="InterPro"/>
</dbReference>
<dbReference type="GO" id="GO:0009252">
    <property type="term" value="P:peptidoglycan biosynthetic process"/>
    <property type="evidence" value="ECO:0007669"/>
    <property type="project" value="TreeGrafter"/>
</dbReference>
<dbReference type="GO" id="GO:0006048">
    <property type="term" value="P:UDP-N-acetylglucosamine biosynthetic process"/>
    <property type="evidence" value="ECO:0007669"/>
    <property type="project" value="TreeGrafter"/>
</dbReference>
<dbReference type="CDD" id="cd05802">
    <property type="entry name" value="GlmM"/>
    <property type="match status" value="1"/>
</dbReference>
<dbReference type="FunFam" id="3.30.310.50:FF:000001">
    <property type="entry name" value="Phosphoglucosamine mutase"/>
    <property type="match status" value="1"/>
</dbReference>
<dbReference type="FunFam" id="3.40.120.10:FF:000001">
    <property type="entry name" value="Phosphoglucosamine mutase"/>
    <property type="match status" value="1"/>
</dbReference>
<dbReference type="FunFam" id="3.40.120.10:FF:000002">
    <property type="entry name" value="Phosphoglucosamine mutase"/>
    <property type="match status" value="1"/>
</dbReference>
<dbReference type="Gene3D" id="3.40.120.10">
    <property type="entry name" value="Alpha-D-Glucose-1,6-Bisphosphate, subunit A, domain 3"/>
    <property type="match status" value="3"/>
</dbReference>
<dbReference type="Gene3D" id="3.30.310.50">
    <property type="entry name" value="Alpha-D-phosphohexomutase, C-terminal domain"/>
    <property type="match status" value="1"/>
</dbReference>
<dbReference type="HAMAP" id="MF_01554_B">
    <property type="entry name" value="GlmM_B"/>
    <property type="match status" value="1"/>
</dbReference>
<dbReference type="InterPro" id="IPR005844">
    <property type="entry name" value="A-D-PHexomutase_a/b/a-I"/>
</dbReference>
<dbReference type="InterPro" id="IPR016055">
    <property type="entry name" value="A-D-PHexomutase_a/b/a-I/II/III"/>
</dbReference>
<dbReference type="InterPro" id="IPR005845">
    <property type="entry name" value="A-D-PHexomutase_a/b/a-II"/>
</dbReference>
<dbReference type="InterPro" id="IPR005846">
    <property type="entry name" value="A-D-PHexomutase_a/b/a-III"/>
</dbReference>
<dbReference type="InterPro" id="IPR005843">
    <property type="entry name" value="A-D-PHexomutase_C"/>
</dbReference>
<dbReference type="InterPro" id="IPR036900">
    <property type="entry name" value="A-D-PHexomutase_C_sf"/>
</dbReference>
<dbReference type="InterPro" id="IPR016066">
    <property type="entry name" value="A-D-PHexomutase_CS"/>
</dbReference>
<dbReference type="InterPro" id="IPR005841">
    <property type="entry name" value="Alpha-D-phosphohexomutase_SF"/>
</dbReference>
<dbReference type="InterPro" id="IPR006352">
    <property type="entry name" value="GlmM_bact"/>
</dbReference>
<dbReference type="InterPro" id="IPR050060">
    <property type="entry name" value="Phosphoglucosamine_mutase"/>
</dbReference>
<dbReference type="NCBIfam" id="TIGR01455">
    <property type="entry name" value="glmM"/>
    <property type="match status" value="1"/>
</dbReference>
<dbReference type="NCBIfam" id="NF008139">
    <property type="entry name" value="PRK10887.1"/>
    <property type="match status" value="1"/>
</dbReference>
<dbReference type="PANTHER" id="PTHR42946:SF1">
    <property type="entry name" value="PHOSPHOGLUCOMUTASE (ALPHA-D-GLUCOSE-1,6-BISPHOSPHATE-DEPENDENT)"/>
    <property type="match status" value="1"/>
</dbReference>
<dbReference type="PANTHER" id="PTHR42946">
    <property type="entry name" value="PHOSPHOHEXOSE MUTASE"/>
    <property type="match status" value="1"/>
</dbReference>
<dbReference type="Pfam" id="PF02878">
    <property type="entry name" value="PGM_PMM_I"/>
    <property type="match status" value="1"/>
</dbReference>
<dbReference type="Pfam" id="PF02879">
    <property type="entry name" value="PGM_PMM_II"/>
    <property type="match status" value="1"/>
</dbReference>
<dbReference type="Pfam" id="PF02880">
    <property type="entry name" value="PGM_PMM_III"/>
    <property type="match status" value="1"/>
</dbReference>
<dbReference type="Pfam" id="PF00408">
    <property type="entry name" value="PGM_PMM_IV"/>
    <property type="match status" value="1"/>
</dbReference>
<dbReference type="PRINTS" id="PR00509">
    <property type="entry name" value="PGMPMM"/>
</dbReference>
<dbReference type="SUPFAM" id="SSF55957">
    <property type="entry name" value="Phosphoglucomutase, C-terminal domain"/>
    <property type="match status" value="1"/>
</dbReference>
<dbReference type="SUPFAM" id="SSF53738">
    <property type="entry name" value="Phosphoglucomutase, first 3 domains"/>
    <property type="match status" value="3"/>
</dbReference>
<dbReference type="PROSITE" id="PS00710">
    <property type="entry name" value="PGM_PMM"/>
    <property type="match status" value="1"/>
</dbReference>
<evidence type="ECO:0000255" key="1">
    <source>
        <dbReference type="HAMAP-Rule" id="MF_01554"/>
    </source>
</evidence>
<accession>A8LS40</accession>
<feature type="chain" id="PRO_1000087765" description="Phosphoglucosamine mutase">
    <location>
        <begin position="1"/>
        <end position="447"/>
    </location>
</feature>
<feature type="active site" description="Phosphoserine intermediate" evidence="1">
    <location>
        <position position="103"/>
    </location>
</feature>
<feature type="binding site" description="via phosphate group" evidence="1">
    <location>
        <position position="103"/>
    </location>
    <ligand>
        <name>Mg(2+)</name>
        <dbReference type="ChEBI" id="CHEBI:18420"/>
    </ligand>
</feature>
<feature type="binding site" evidence="1">
    <location>
        <position position="242"/>
    </location>
    <ligand>
        <name>Mg(2+)</name>
        <dbReference type="ChEBI" id="CHEBI:18420"/>
    </ligand>
</feature>
<feature type="binding site" evidence="1">
    <location>
        <position position="244"/>
    </location>
    <ligand>
        <name>Mg(2+)</name>
        <dbReference type="ChEBI" id="CHEBI:18420"/>
    </ligand>
</feature>
<feature type="binding site" evidence="1">
    <location>
        <position position="246"/>
    </location>
    <ligand>
        <name>Mg(2+)</name>
        <dbReference type="ChEBI" id="CHEBI:18420"/>
    </ligand>
</feature>
<feature type="modified residue" description="Phosphoserine" evidence="1">
    <location>
        <position position="103"/>
    </location>
</feature>
<protein>
    <recommendedName>
        <fullName evidence="1">Phosphoglucosamine mutase</fullName>
        <ecNumber evidence="1">5.4.2.10</ecNumber>
    </recommendedName>
</protein>
<organism>
    <name type="scientific">Dinoroseobacter shibae (strain DSM 16493 / NCIMB 14021 / DFL 12)</name>
    <dbReference type="NCBI Taxonomy" id="398580"/>
    <lineage>
        <taxon>Bacteria</taxon>
        <taxon>Pseudomonadati</taxon>
        <taxon>Pseudomonadota</taxon>
        <taxon>Alphaproteobacteria</taxon>
        <taxon>Rhodobacterales</taxon>
        <taxon>Roseobacteraceae</taxon>
        <taxon>Dinoroseobacter</taxon>
    </lineage>
</organism>
<name>GLMM_DINSH</name>
<keyword id="KW-0413">Isomerase</keyword>
<keyword id="KW-0460">Magnesium</keyword>
<keyword id="KW-0479">Metal-binding</keyword>
<keyword id="KW-0597">Phosphoprotein</keyword>
<keyword id="KW-1185">Reference proteome</keyword>